<accession>P63575</accession>
<accession>Q99X38</accession>
<keyword id="KW-0012">Acyltransferase</keyword>
<keyword id="KW-0028">Amino-acid biosynthesis</keyword>
<keyword id="KW-0055">Arginine biosynthesis</keyword>
<keyword id="KW-0068">Autocatalytic cleavage</keyword>
<keyword id="KW-0963">Cytoplasm</keyword>
<keyword id="KW-0511">Multifunctional enzyme</keyword>
<keyword id="KW-0808">Transferase</keyword>
<protein>
    <recommendedName>
        <fullName evidence="1">Arginine biosynthesis bifunctional protein ArgJ</fullName>
    </recommendedName>
    <domain>
        <recommendedName>
            <fullName evidence="1">Glutamate N-acetyltransferase</fullName>
            <ecNumber evidence="1">2.3.1.35</ecNumber>
        </recommendedName>
        <alternativeName>
            <fullName evidence="1">Ornithine acetyltransferase</fullName>
            <shortName evidence="1">OATase</shortName>
        </alternativeName>
        <alternativeName>
            <fullName evidence="1">Ornithine transacetylase</fullName>
        </alternativeName>
    </domain>
    <domain>
        <recommendedName>
            <fullName evidence="1">Amino-acid acetyltransferase</fullName>
            <ecNumber evidence="1">2.3.1.1</ecNumber>
        </recommendedName>
        <alternativeName>
            <fullName evidence="1">N-acetylglutamate synthase</fullName>
            <shortName evidence="1">AGSase</shortName>
        </alternativeName>
    </domain>
    <component>
        <recommendedName>
            <fullName evidence="1">Arginine biosynthesis bifunctional protein ArgJ alpha chain</fullName>
        </recommendedName>
    </component>
    <component>
        <recommendedName>
            <fullName evidence="1">Arginine biosynthesis bifunctional protein ArgJ beta chain</fullName>
        </recommendedName>
    </component>
</protein>
<feature type="chain" id="PRO_0000002231" description="Arginine biosynthesis bifunctional protein ArgJ alpha chain" evidence="1">
    <location>
        <begin position="1"/>
        <end position="199"/>
    </location>
</feature>
<feature type="chain" id="PRO_0000002232" description="Arginine biosynthesis bifunctional protein ArgJ beta chain" evidence="1">
    <location>
        <begin position="200"/>
        <end position="413"/>
    </location>
</feature>
<feature type="active site" description="Nucleophile" evidence="1">
    <location>
        <position position="200"/>
    </location>
</feature>
<feature type="binding site" evidence="1">
    <location>
        <position position="163"/>
    </location>
    <ligand>
        <name>substrate</name>
    </ligand>
</feature>
<feature type="binding site" evidence="1">
    <location>
        <position position="189"/>
    </location>
    <ligand>
        <name>substrate</name>
    </ligand>
</feature>
<feature type="binding site" evidence="1">
    <location>
        <position position="200"/>
    </location>
    <ligand>
        <name>substrate</name>
    </ligand>
</feature>
<feature type="binding site" evidence="1">
    <location>
        <position position="286"/>
    </location>
    <ligand>
        <name>substrate</name>
    </ligand>
</feature>
<feature type="binding site" evidence="1">
    <location>
        <position position="408"/>
    </location>
    <ligand>
        <name>substrate</name>
    </ligand>
</feature>
<feature type="binding site" evidence="1">
    <location>
        <position position="413"/>
    </location>
    <ligand>
        <name>substrate</name>
    </ligand>
</feature>
<feature type="site" description="Involved in the stabilization of negative charge on the oxyanion by the formation of the oxyanion hole" evidence="1">
    <location>
        <position position="127"/>
    </location>
</feature>
<feature type="site" description="Involved in the stabilization of negative charge on the oxyanion by the formation of the oxyanion hole" evidence="1">
    <location>
        <position position="128"/>
    </location>
</feature>
<feature type="site" description="Cleavage; by autolysis" evidence="1">
    <location>
        <begin position="199"/>
        <end position="200"/>
    </location>
</feature>
<proteinExistence type="inferred from homology"/>
<comment type="function">
    <text evidence="1">Catalyzes two activities which are involved in the cyclic version of arginine biosynthesis: the synthesis of N-acetylglutamate from glutamate and acetyl-CoA as the acetyl donor, and of ornithine by transacetylation between N(2)-acetylornithine and glutamate.</text>
</comment>
<comment type="catalytic activity">
    <reaction evidence="1">
        <text>N(2)-acetyl-L-ornithine + L-glutamate = N-acetyl-L-glutamate + L-ornithine</text>
        <dbReference type="Rhea" id="RHEA:15349"/>
        <dbReference type="ChEBI" id="CHEBI:29985"/>
        <dbReference type="ChEBI" id="CHEBI:44337"/>
        <dbReference type="ChEBI" id="CHEBI:46911"/>
        <dbReference type="ChEBI" id="CHEBI:57805"/>
        <dbReference type="EC" id="2.3.1.35"/>
    </reaction>
</comment>
<comment type="catalytic activity">
    <reaction evidence="1">
        <text>L-glutamate + acetyl-CoA = N-acetyl-L-glutamate + CoA + H(+)</text>
        <dbReference type="Rhea" id="RHEA:24292"/>
        <dbReference type="ChEBI" id="CHEBI:15378"/>
        <dbReference type="ChEBI" id="CHEBI:29985"/>
        <dbReference type="ChEBI" id="CHEBI:44337"/>
        <dbReference type="ChEBI" id="CHEBI:57287"/>
        <dbReference type="ChEBI" id="CHEBI:57288"/>
        <dbReference type="EC" id="2.3.1.1"/>
    </reaction>
</comment>
<comment type="pathway">
    <text evidence="1">Amino-acid biosynthesis; L-arginine biosynthesis; L-ornithine and N-acetyl-L-glutamate from L-glutamate and N(2)-acetyl-L-ornithine (cyclic): step 1/1.</text>
</comment>
<comment type="pathway">
    <text evidence="1">Amino-acid biosynthesis; L-arginine biosynthesis; N(2)-acetyl-L-ornithine from L-glutamate: step 1/4.</text>
</comment>
<comment type="subunit">
    <text evidence="1">Heterotetramer of two alpha and two beta chains.</text>
</comment>
<comment type="subcellular location">
    <subcellularLocation>
        <location evidence="1">Cytoplasm</location>
    </subcellularLocation>
</comment>
<comment type="similarity">
    <text evidence="1">Belongs to the ArgJ family.</text>
</comment>
<reference key="1">
    <citation type="journal article" date="2001" name="Lancet">
        <title>Whole genome sequencing of meticillin-resistant Staphylococcus aureus.</title>
        <authorList>
            <person name="Kuroda M."/>
            <person name="Ohta T."/>
            <person name="Uchiyama I."/>
            <person name="Baba T."/>
            <person name="Yuzawa H."/>
            <person name="Kobayashi I."/>
            <person name="Cui L."/>
            <person name="Oguchi A."/>
            <person name="Aoki K."/>
            <person name="Nagai Y."/>
            <person name="Lian J.-Q."/>
            <person name="Ito T."/>
            <person name="Kanamori M."/>
            <person name="Matsumaru H."/>
            <person name="Maruyama A."/>
            <person name="Murakami H."/>
            <person name="Hosoyama A."/>
            <person name="Mizutani-Ui Y."/>
            <person name="Takahashi N.K."/>
            <person name="Sawano T."/>
            <person name="Inoue R."/>
            <person name="Kaito C."/>
            <person name="Sekimizu K."/>
            <person name="Hirakawa H."/>
            <person name="Kuhara S."/>
            <person name="Goto S."/>
            <person name="Yabuzaki J."/>
            <person name="Kanehisa M."/>
            <person name="Yamashita A."/>
            <person name="Oshima K."/>
            <person name="Furuya K."/>
            <person name="Yoshino C."/>
            <person name="Shiba T."/>
            <person name="Hattori M."/>
            <person name="Ogasawara N."/>
            <person name="Hayashi H."/>
            <person name="Hiramatsu K."/>
        </authorList>
    </citation>
    <scope>NUCLEOTIDE SEQUENCE [LARGE SCALE GENOMIC DNA]</scope>
    <source>
        <strain>Mu50 / ATCC 700699</strain>
    </source>
</reference>
<evidence type="ECO:0000255" key="1">
    <source>
        <dbReference type="HAMAP-Rule" id="MF_01106"/>
    </source>
</evidence>
<organism>
    <name type="scientific">Staphylococcus aureus (strain Mu50 / ATCC 700699)</name>
    <dbReference type="NCBI Taxonomy" id="158878"/>
    <lineage>
        <taxon>Bacteria</taxon>
        <taxon>Bacillati</taxon>
        <taxon>Bacillota</taxon>
        <taxon>Bacilli</taxon>
        <taxon>Bacillales</taxon>
        <taxon>Staphylococcaceae</taxon>
        <taxon>Staphylococcus</taxon>
    </lineage>
</organism>
<name>ARGJ_STAAM</name>
<sequence length="413" mass="44453">MKHQETTSQQYNFSIIKHGDISTPQGFTAGGMHIGLRANKKDFGWIYSSSLASSAAVYTLNQFKAAPLIVTEDTLQKSKGKLQALVVNSANANSCTGQQGIDDARQTQTWVAQQLQIPSEHVAVASTGVIGEYLPMDKIKTGTEHIKDTNFATPGAFNEAILTTDTCTKHIAVSLKIDGKTVTIGGSAKGSGMIHPNMATMLAFITTDASIESNTLHQLLKSSTDHTFNMITVDGDTSTNDMVLVMANHQVEHQILSQDHPQWETFVDAFNFVCTFLAKAIARDGEGATKLISVNVSGAKSISDARKIGKTIVSSNLVKSAIFGEDANFGRIITAIGYSGCEIDPKCTYVQLNQIPVVDKGMAVLFDEQAMSNTLTHEHVTIDVQLGLGNAAATAYGCDLSYDYVRINASYRT</sequence>
<dbReference type="EC" id="2.3.1.35" evidence="1"/>
<dbReference type="EC" id="2.3.1.1" evidence="1"/>
<dbReference type="EMBL" id="BA000017">
    <property type="protein sequence ID" value="BAB56345.1"/>
    <property type="molecule type" value="Genomic_DNA"/>
</dbReference>
<dbReference type="RefSeq" id="WP_000682619.1">
    <property type="nucleotide sequence ID" value="NC_002758.2"/>
</dbReference>
<dbReference type="SMR" id="P63575"/>
<dbReference type="MEROPS" id="T05.002"/>
<dbReference type="KEGG" id="sav:SAV0183"/>
<dbReference type="HOGENOM" id="CLU_027172_1_0_9"/>
<dbReference type="PhylomeDB" id="P63575"/>
<dbReference type="UniPathway" id="UPA00068">
    <property type="reaction ID" value="UER00106"/>
</dbReference>
<dbReference type="UniPathway" id="UPA00068">
    <property type="reaction ID" value="UER00111"/>
</dbReference>
<dbReference type="Proteomes" id="UP000002481">
    <property type="component" value="Chromosome"/>
</dbReference>
<dbReference type="GO" id="GO:0005737">
    <property type="term" value="C:cytoplasm"/>
    <property type="evidence" value="ECO:0007669"/>
    <property type="project" value="UniProtKB-SubCell"/>
</dbReference>
<dbReference type="GO" id="GO:0004358">
    <property type="term" value="F:glutamate N-acetyltransferase activity"/>
    <property type="evidence" value="ECO:0007669"/>
    <property type="project" value="UniProtKB-UniRule"/>
</dbReference>
<dbReference type="GO" id="GO:0004042">
    <property type="term" value="F:L-glutamate N-acetyltransferase activity"/>
    <property type="evidence" value="ECO:0007669"/>
    <property type="project" value="UniProtKB-UniRule"/>
</dbReference>
<dbReference type="GO" id="GO:0006526">
    <property type="term" value="P:L-arginine biosynthetic process"/>
    <property type="evidence" value="ECO:0007669"/>
    <property type="project" value="UniProtKB-UniRule"/>
</dbReference>
<dbReference type="GO" id="GO:0006592">
    <property type="term" value="P:ornithine biosynthetic process"/>
    <property type="evidence" value="ECO:0007669"/>
    <property type="project" value="TreeGrafter"/>
</dbReference>
<dbReference type="CDD" id="cd02152">
    <property type="entry name" value="OAT"/>
    <property type="match status" value="1"/>
</dbReference>
<dbReference type="FunFam" id="3.10.20.340:FF:000001">
    <property type="entry name" value="Arginine biosynthesis bifunctional protein ArgJ, chloroplastic"/>
    <property type="match status" value="1"/>
</dbReference>
<dbReference type="FunFam" id="3.60.70.12:FF:000001">
    <property type="entry name" value="Arginine biosynthesis bifunctional protein ArgJ, chloroplastic"/>
    <property type="match status" value="1"/>
</dbReference>
<dbReference type="FunFam" id="3.30.2330.10:FF:000001">
    <property type="entry name" value="Arginine biosynthesis bifunctional protein ArgJ, mitochondrial"/>
    <property type="match status" value="1"/>
</dbReference>
<dbReference type="Gene3D" id="3.30.2330.10">
    <property type="entry name" value="arginine biosynthesis bifunctional protein suprefamily"/>
    <property type="match status" value="1"/>
</dbReference>
<dbReference type="Gene3D" id="3.10.20.340">
    <property type="entry name" value="ArgJ beta chain, C-terminal domain"/>
    <property type="match status" value="1"/>
</dbReference>
<dbReference type="Gene3D" id="3.60.70.12">
    <property type="entry name" value="L-amino peptidase D-ALA esterase/amidase"/>
    <property type="match status" value="1"/>
</dbReference>
<dbReference type="HAMAP" id="MF_01106">
    <property type="entry name" value="ArgJ"/>
    <property type="match status" value="1"/>
</dbReference>
<dbReference type="InterPro" id="IPR002813">
    <property type="entry name" value="Arg_biosynth_ArgJ"/>
</dbReference>
<dbReference type="InterPro" id="IPR016117">
    <property type="entry name" value="ArgJ-like_dom_sf"/>
</dbReference>
<dbReference type="InterPro" id="IPR042195">
    <property type="entry name" value="ArgJ_beta_C"/>
</dbReference>
<dbReference type="NCBIfam" id="TIGR00120">
    <property type="entry name" value="ArgJ"/>
    <property type="match status" value="1"/>
</dbReference>
<dbReference type="NCBIfam" id="NF003802">
    <property type="entry name" value="PRK05388.1"/>
    <property type="match status" value="1"/>
</dbReference>
<dbReference type="PANTHER" id="PTHR23100">
    <property type="entry name" value="ARGININE BIOSYNTHESIS BIFUNCTIONAL PROTEIN ARGJ"/>
    <property type="match status" value="1"/>
</dbReference>
<dbReference type="PANTHER" id="PTHR23100:SF0">
    <property type="entry name" value="ARGININE BIOSYNTHESIS BIFUNCTIONAL PROTEIN ARGJ, MITOCHONDRIAL"/>
    <property type="match status" value="1"/>
</dbReference>
<dbReference type="Pfam" id="PF01960">
    <property type="entry name" value="ArgJ"/>
    <property type="match status" value="1"/>
</dbReference>
<dbReference type="SUPFAM" id="SSF56266">
    <property type="entry name" value="DmpA/ArgJ-like"/>
    <property type="match status" value="1"/>
</dbReference>
<gene>
    <name evidence="1" type="primary">argJ</name>
    <name type="ordered locus">SAV0183</name>
</gene>